<sequence>MQRTPAMRVLVPALLVAISALSGCGKSEAPPPAQTPEVGIVTLEAQTVTLNTELPGRTNAFRIAEVRPQVNGIILKRLFKEGSDVKAGQQLYQIDPATYEADYQSAQANLASTQEQAQRYKLLVADQAVSKQQYADANAAYLQSKAAVEQARINLRYTKVLSPISGRIGRSAVTEGALVTNGQANAMATVQQLDPIYVDVTQPSTALLRLRRELASGQLERAGDNAAKVSLKLEDGSQYPLEGRLEFSEVSVDEGTGSVTIRAVFPNPNNELLPGMFVHAQLQEGVKQKAILAPQQGVTRDLKGQATALVVNAQNKVELRVIKADRVIGDKWLVTEGLNAGDKIITEGLQFVQPGVEVKTVPAKNVASAQKADAAPAKTDSKG</sequence>
<gene>
    <name type="primary">mexA</name>
    <name type="ordered locus">PA0425</name>
</gene>
<comment type="function">
    <text evidence="7 8 9 10 11 12 13 14 15 16">The periplasmic linker component of the MexAB-OprM efflux system that confers multidrug resistance (PubMed:25901994, PubMed:30944318, PubMed:33009415, PubMed:8226684). Functions as the major efflux pump for n-hexane and p-xylene efflux (PubMed:9603892). Has been shown in one study to be involved in the active efflux of the autoinducer N-(3-oxododecanoyl) homoserine lactone, thereby playing an indirect role in quorum-sensing; but has been shown in another study not to be involved in efflux of this autoinducer (PubMed:32715566, PubMed:9973347). Over-expression of the pump increases antibiotic and solvent efflux capacities (PubMed:8540696). Implicated in the secretion of the siderophore pyoverdine (PubMed:7968531, PubMed:8226684).</text>
</comment>
<comment type="activity regulation">
    <text evidence="6 7 12">Export of antibiotics and solvents is dramatically decreased in the presence of the protonophore carbonyl cyanide m-chlorophenylhydrazone (CCCP), therefore may be driven by a proton gradient (PubMed:25901994, PubMed:8540696). Antibiotic efflux is inhibited by pyridopyrimidine derivatives, such as ABI-PP, acting by binding to a hydrophobic pocket in MexB (PubMed:23812586).</text>
</comment>
<comment type="subunit">
    <text evidence="3 4 5 7 8 10">Component of the MexAB-OprM multidrug efflux complex, composed of six MexA subunits forming a hexameric tube, binding to a MexB trimer, which interact with the trimeric OprM outer membrane channel protein (PubMed:15117957, PubMed:15226509, PubMed:15325256, PubMed:30944318). OprM is thought to not directly contact MexB; instead, MexA joins MexB and OprM by forming a funnel-like hexamer anchored to the inner membrane (PubMed:15117957, PubMed:15226509, PubMed:30944318). MexA may initially form a hexameric ring complex with MexB prior to OprM, then OprM undergoes a conformational change as it contacts MexA, allowing the periplasmic gate to open (PubMed:25901994, PubMed:30944318, PubMed:33009415). It is thought that, under high intracellular substrate concentration, MexB ejects substrate into the tunnel formed by MexA-OprM; as the substrate level declines, conformational changes in MexB cause efflux to reduce and stop and the complex shifts to the closed state (PubMed:30944318, PubMed:33009415). MexB subunit acts as a substrate:proton antiporter and activity is enhanced significantly when in complex with MexA and OprM, in vitro (PubMed:25901994, PubMed:33009415).</text>
</comment>
<comment type="subcellular location">
    <subcellularLocation>
        <location evidence="2">Cell inner membrane</location>
        <topology evidence="1 2">Lipid-anchor</topology>
    </subcellularLocation>
    <text>The membrane anchor is not necessary for antibiotic efflux as the protein is functional when targeted to the periplasm by a foreign signal peptide.</text>
</comment>
<comment type="induction">
    <text>By growth under severe iron limitation.</text>
</comment>
<comment type="disruption phenotype">
    <text evidence="14">Disruption of MexA, MexB and OprM significantly reduces active efflux of N-(3-oxododecanoyl) homoserine lactone/3-oxo-C12-HSL/PAI-1, but not N-butyryl homoserine lactone/C4-HSL/PAI-2.</text>
</comment>
<comment type="miscellaneous">
    <text>In both X-ray crystal structures approximately the last 100 residues are not ordered.</text>
</comment>
<comment type="similarity">
    <text evidence="17">Belongs to the membrane fusion protein (MFP) (TC 8.A.1) family.</text>
</comment>
<comment type="caution">
    <text evidence="9 14">Has been shown in one study to be involved in the active efflux of the autoinducer N-(3-oxododecanoyl) homoserine lactone (PubMed:9973347). However, has been shown in another study not to be involved in efflux of this autoinducer (PubMed:32715566).</text>
</comment>
<reference key="1">
    <citation type="journal article" date="1993" name="Mol. Microbiol.">
        <title>Cloning and sequence analysis of an EnvCD homologue in Pseudomonas aeruginosa: regulation by iron and possible involvement in the secretion of the siderophore pyoverdine.</title>
        <authorList>
            <person name="Poole K."/>
            <person name="Heinrichs D.E."/>
            <person name="Neshat S."/>
        </authorList>
    </citation>
    <scope>NUCLEOTIDE SEQUENCE [GENOMIC DNA]</scope>
    <source>
        <strain>PAO6609</strain>
    </source>
</reference>
<reference key="2">
    <citation type="journal article" date="2000" name="Nature">
        <title>Complete genome sequence of Pseudomonas aeruginosa PAO1, an opportunistic pathogen.</title>
        <authorList>
            <person name="Stover C.K."/>
            <person name="Pham X.-Q.T."/>
            <person name="Erwin A.L."/>
            <person name="Mizoguchi S.D."/>
            <person name="Warrener P."/>
            <person name="Hickey M.J."/>
            <person name="Brinkman F.S.L."/>
            <person name="Hufnagle W.O."/>
            <person name="Kowalik D.J."/>
            <person name="Lagrou M."/>
            <person name="Garber R.L."/>
            <person name="Goltry L."/>
            <person name="Tolentino E."/>
            <person name="Westbrock-Wadman S."/>
            <person name="Yuan Y."/>
            <person name="Brody L.L."/>
            <person name="Coulter S.N."/>
            <person name="Folger K.R."/>
            <person name="Kas A."/>
            <person name="Larbig K."/>
            <person name="Lim R.M."/>
            <person name="Smith K.A."/>
            <person name="Spencer D.H."/>
            <person name="Wong G.K.-S."/>
            <person name="Wu Z."/>
            <person name="Paulsen I.T."/>
            <person name="Reizer J."/>
            <person name="Saier M.H. Jr."/>
            <person name="Hancock R.E.W."/>
            <person name="Lory S."/>
            <person name="Olson M.V."/>
        </authorList>
    </citation>
    <scope>NUCLEOTIDE SEQUENCE [LARGE SCALE GENOMIC DNA]</scope>
    <source>
        <strain>ATCC 15692 / DSM 22644 / CIP 104116 / JCM 14847 / LMG 12228 / 1C / PRS 101 / PAO1</strain>
    </source>
</reference>
<reference key="3">
    <citation type="journal article" date="2004" name="J. Proteome Res.">
        <title>Global analysis of the membrane subproteome of Pseudomonas aeruginosa using liquid chromatography-tandem mass spectrometry.</title>
        <authorList>
            <person name="Blonder J."/>
            <person name="Goshe M.B."/>
            <person name="Xiao W."/>
            <person name="Camp D.G. II"/>
            <person name="Wingerd M."/>
            <person name="Davis R.W."/>
            <person name="Smith R.D."/>
        </authorList>
    </citation>
    <scope>PROTEIN SEQUENCE OF 63-76; 87-119; 263-287 AND 327-359</scope>
    <scope>IDENTIFICATION BY MASS SPECTROMETRY</scope>
    <source>
        <strain>ATCC 15692 / DSM 22644 / CIP 104116 / JCM 14847 / LMG 12228 / 1C / PRS 101 / PAO1</strain>
    </source>
</reference>
<reference key="4">
    <citation type="journal article" date="1999" name="Cell">
        <title>Molecular mechanisms of bacterial virulence elucidated using a Pseudomonas aeruginosa-Caenorhabditis elegans pathogenesis model.</title>
        <authorList>
            <person name="Mahajan-Miklos S."/>
            <person name="Tan M.-W."/>
            <person name="Rahme L.G."/>
            <person name="Ausubel F.M."/>
        </authorList>
    </citation>
    <scope>NUCLEOTIDE SEQUENCE [GENOMIC DNA] OF 182-383</scope>
    <source>
        <strain>PA14</strain>
    </source>
</reference>
<reference key="5">
    <citation type="journal article" date="1993" name="J. Bacteriol.">
        <title>Multiple antibiotic resistance in Pseudomonas aeruginosa: evidence for involvement of an efflux operon.</title>
        <authorList>
            <person name="Poole K."/>
            <person name="Krebes K."/>
            <person name="McNally C."/>
            <person name="Neshat S."/>
        </authorList>
    </citation>
    <scope>FUNCTION AS AN ANTIBIOTIC EFFLUX PUMP</scope>
    <source>
        <strain>PAO6609</strain>
    </source>
</reference>
<reference key="6">
    <citation type="journal article" date="1995" name="Antimicrob. Agents Chemother.">
        <title>Role of mexA-mexB-oprM in antibiotic efflux in Pseudomonas aeruginosa.</title>
        <authorList>
            <person name="Li X.-Z."/>
            <person name="Nikaido H."/>
            <person name="Poole K."/>
        </authorList>
    </citation>
    <scope>FUNCTION IN ANTIBIOTIC EFFLUX</scope>
    <scope>ACTIVITY REGULATION</scope>
    <source>
        <strain>ATCC 15692 / DSM 22644 / CIP 104116 / JCM 14847 / LMG 12228 / 1C / PRS 101 / PAO1</strain>
    </source>
</reference>
<reference key="7">
    <citation type="journal article" date="1998" name="J. Bacteriol.">
        <title>Role of the multidrug efflux systems of Pseudomonas aeruginosa in organic solvent tolerance.</title>
        <authorList>
            <person name="Li X.-Z."/>
            <person name="Zhang L."/>
            <person name="Poole K."/>
        </authorList>
    </citation>
    <scope>FUNCTION IN SOLVENT EFFLUX</scope>
    <source>
        <strain>ATCC 15692 / DSM 22644 / CIP 104116 / JCM 14847 / LMG 12228 / 1C / PRS 101 / PAO1</strain>
    </source>
</reference>
<reference key="8">
    <citation type="journal article" date="1999" name="J. Bacteriol.">
        <title>Active efflux and diffusion are involved in transport of Pseudomonas aeruginosa cell-to-cell signals.</title>
        <authorList>
            <person name="Pearson J.P."/>
            <person name="Van Delden C."/>
            <person name="Iglewski B.H."/>
        </authorList>
    </citation>
    <scope>FUNCTION</scope>
    <scope>DISRUPTION PHENOTYPE</scope>
</reference>
<reference key="9">
    <citation type="journal article" date="2000" name="J. Biol. Chem.">
        <title>Function of the membrane fusion protein, MexA, of the MexA, B-OprM efflux pump in Pseudomonas aeruginosa without an anchoring membrane.</title>
        <authorList>
            <person name="Yoneyama H."/>
            <person name="Maseda H."/>
            <person name="Kamiguchi H."/>
            <person name="Nakae T."/>
        </authorList>
    </citation>
    <scope>SUBCELLULAR LOCATION</scope>
    <scope>DIACYLGLYCEROL AT CYS-24</scope>
    <scope>PALMITOYLATION AT CYS-24</scope>
    <scope>MUTAGENESIS OF CYS-24</scope>
    <source>
        <strain>PAO4290</strain>
    </source>
</reference>
<reference key="10">
    <citation type="journal article" date="2004" name="Biochem. Biophys. Res. Commun.">
        <title>Role of the membrane fusion protein in the assembly of resistance-nodulation-cell division multidrug efflux pump in Pseudomonas aeruginosa.</title>
        <authorList>
            <person name="Mokhonov V.V."/>
            <person name="Mokhonova E.I."/>
            <person name="Akama H."/>
            <person name="Nakae T."/>
        </authorList>
    </citation>
    <scope>ASSEMBLY OF TRIPARTITE EFFLUX COMPLEX</scope>
    <source>
        <strain>PAO4290</strain>
    </source>
</reference>
<reference key="11">
    <citation type="journal article" date="2013" name="Nature">
        <title>Structural basis for the inhibition of bacterial multidrug exporters.</title>
        <authorList>
            <person name="Nakashima R."/>
            <person name="Sakurai K."/>
            <person name="Yamasaki S."/>
            <person name="Hayashi K."/>
            <person name="Nagata C."/>
            <person name="Hoshino K."/>
            <person name="Onodera Y."/>
            <person name="Nishino K."/>
            <person name="Yamaguchi A."/>
        </authorList>
    </citation>
    <scope>ACTIVITY REGULATION</scope>
</reference>
<reference key="12">
    <citation type="journal article" date="2015" name="Nat. Commun.">
        <title>In vitro transport activity of the fully assembled MexAB-OprM efflux pump from Pseudomonas aeruginosa.</title>
        <authorList>
            <person name="Verchere A."/>
            <person name="Dezi M."/>
            <person name="Adrien V."/>
            <person name="Broutin I."/>
            <person name="Picard M."/>
        </authorList>
    </citation>
    <scope>FUNCTION</scope>
    <scope>SUBUNIT</scope>
</reference>
<reference key="13">
    <citation type="journal article" date="2020" name="Environ. Microbiol.">
        <title>The impaired quorum sensing response of Pseudomonas aeruginosa MexAB-OprM efflux pump overexpressing mutants is not due to non-physiological efflux of 3-oxo-C12-HSL.</title>
        <authorList>
            <person name="Alcalde-Rico M."/>
            <person name="Olivares-Pacheco J."/>
            <person name="Halliday N."/>
            <person name="Camara M."/>
            <person name="Martinez J.L."/>
        </authorList>
    </citation>
    <scope>FUNCTION</scope>
</reference>
<reference key="14">
    <citation type="journal article" date="2004" name="J. Biol. Chem.">
        <title>Crystal structure of the membrane fusion protein, MexA, of the multidrug transporter in Pseudomonas aeruginosa.</title>
        <authorList>
            <person name="Akama H."/>
            <person name="Matsuura T."/>
            <person name="Kashiwagi S."/>
            <person name="Yoneyama H."/>
            <person name="Narita S."/>
            <person name="Tsukihara T."/>
            <person name="Nakagawa A."/>
            <person name="Nakae T."/>
        </authorList>
    </citation>
    <scope>X-RAY CRYSTALLOGRAPHY (2.4 ANGSTROMS) OF 25-383</scope>
    <source>
        <strain>PAO4290</strain>
    </source>
</reference>
<reference key="15">
    <citation type="journal article" date="2004" name="Proc. Natl. Acad. Sci. U.S.A.">
        <title>Structure of the periplasmic component of a bacterial drug efflux pump.</title>
        <authorList>
            <person name="Higgins M.K."/>
            <person name="Bokma E."/>
            <person name="Koronakis E."/>
            <person name="Hughes C."/>
            <person name="Koronakis V."/>
        </authorList>
    </citation>
    <scope>X-RAY CRYSTALLOGRAPHY (3.0 ANGSTROMS) OF 24-383</scope>
    <source>
        <strain>ATCC 15692 / DSM 22644 / CIP 104116 / JCM 14847 / LMG 12228 / 1C / PRS 101 / PAO1</strain>
    </source>
</reference>
<reference evidence="19 20" key="16">
    <citation type="journal article" date="2019" name="Nat. Commun.">
        <title>Structures of the wild-type MexAB-OprM tripartite pump reveal its complex formation and drug efflux mechanism.</title>
        <authorList>
            <person name="Tsutsumi K."/>
            <person name="Yonehara R."/>
            <person name="Ishizaka-Ikeda E."/>
            <person name="Miyazaki N."/>
            <person name="Maeda S."/>
            <person name="Iwasaki K."/>
            <person name="Nakagawa A."/>
            <person name="Yamashita E."/>
        </authorList>
    </citation>
    <scope>STRUCTURE BY ELECTRON MICROSCOPY (3.64 ANGSTROMS) OF 25-383</scope>
    <scope>FUNCTION</scope>
    <scope>SUBUNIT</scope>
    <scope>MUTAGENESIS OF ARG-57; ARG-62; LEU-123; SER-130; ARG-170; THR-256 AND ARG-300</scope>
    <source>
        <strain>ATCC 15692 / DSM 22644 / CIP 104116 / JCM 14847 / LMG 12228 / 1C / PRS 101 / PAO1</strain>
    </source>
</reference>
<reference evidence="21 22" key="17">
    <citation type="journal article" date="2020" name="Nat. Commun.">
        <title>Antibiotic export by MexB multidrug efflux transporter is allosterically controlled by a MexA-OprM chaperone-like complex.</title>
        <authorList>
            <person name="Glavier M."/>
            <person name="Puvanendran D."/>
            <person name="Salvador D."/>
            <person name="Decossas M."/>
            <person name="Phan G."/>
            <person name="Garnier C."/>
            <person name="Frezza E."/>
            <person name="Cece Q."/>
            <person name="Schoehn G."/>
            <person name="Picard M."/>
            <person name="Taveau J.C."/>
            <person name="Daury L."/>
            <person name="Broutin I."/>
            <person name="Lambert O."/>
        </authorList>
    </citation>
    <scope>STRUCTURE BY ELECTRON MICROSCOPY (3.20 ANGSTROMS) OF 24-383</scope>
    <scope>FUNCTION</scope>
    <scope>SUBUNIT</scope>
</reference>
<proteinExistence type="evidence at protein level"/>
<name>MEXA_PSEAE</name>
<dbReference type="EMBL" id="L11616">
    <property type="protein sequence ID" value="AAA74436.1"/>
    <property type="molecule type" value="Genomic_DNA"/>
</dbReference>
<dbReference type="EMBL" id="AE004091">
    <property type="protein sequence ID" value="AAG03814.1"/>
    <property type="molecule type" value="Genomic_DNA"/>
</dbReference>
<dbReference type="EMBL" id="AF092566">
    <property type="protein sequence ID" value="AAD45627.1"/>
    <property type="molecule type" value="Genomic_DNA"/>
</dbReference>
<dbReference type="PIR" id="S39629">
    <property type="entry name" value="S39629"/>
</dbReference>
<dbReference type="RefSeq" id="NP_249116.1">
    <property type="nucleotide sequence ID" value="NC_002516.2"/>
</dbReference>
<dbReference type="RefSeq" id="WP_003118819.1">
    <property type="nucleotide sequence ID" value="NZ_QZGE01000016.1"/>
</dbReference>
<dbReference type="PDB" id="1T5E">
    <property type="method" value="X-ray"/>
    <property type="resolution" value="3.00 A"/>
    <property type="chains" value="A/B/C/D/E/F/G/H/I/J/K/L/M=24-383"/>
</dbReference>
<dbReference type="PDB" id="1VF7">
    <property type="method" value="X-ray"/>
    <property type="resolution" value="2.40 A"/>
    <property type="chains" value="A/B/C/D/E/F/G/H/I/J/K/L/M=25-383"/>
</dbReference>
<dbReference type="PDB" id="2V4D">
    <property type="method" value="X-ray"/>
    <property type="resolution" value="3.20 A"/>
    <property type="chains" value="A/B/C/D/E/F/G/H/I/J/K/L/M=24-383"/>
</dbReference>
<dbReference type="PDB" id="4DK1">
    <property type="method" value="X-ray"/>
    <property type="resolution" value="3.50 A"/>
    <property type="chains" value="A/B/C/D=95-158"/>
</dbReference>
<dbReference type="PDB" id="6IOK">
    <property type="method" value="EM"/>
    <property type="resolution" value="3.64 A"/>
    <property type="chains" value="I/J/K/L/M/N=25-383"/>
</dbReference>
<dbReference type="PDB" id="6IOL">
    <property type="method" value="EM"/>
    <property type="resolution" value="3.76 A"/>
    <property type="chains" value="I/J/K/L/M/N=25-383"/>
</dbReference>
<dbReference type="PDB" id="6TA5">
    <property type="method" value="EM"/>
    <property type="resolution" value="3.20 A"/>
    <property type="chains" value="D/E/F/G/H/I=24-383"/>
</dbReference>
<dbReference type="PDB" id="6TA6">
    <property type="method" value="EM"/>
    <property type="resolution" value="3.20 A"/>
    <property type="chains" value="D/E/F/G/H/I=24-383"/>
</dbReference>
<dbReference type="PDBsum" id="1T5E"/>
<dbReference type="PDBsum" id="1VF7"/>
<dbReference type="PDBsum" id="2V4D"/>
<dbReference type="PDBsum" id="4DK1"/>
<dbReference type="PDBsum" id="6IOK"/>
<dbReference type="PDBsum" id="6IOL"/>
<dbReference type="PDBsum" id="6TA5"/>
<dbReference type="PDBsum" id="6TA6"/>
<dbReference type="EMDB" id="EMD-9695"/>
<dbReference type="EMDB" id="EMD-9696"/>
<dbReference type="SMR" id="P52477"/>
<dbReference type="FunCoup" id="P52477">
    <property type="interactions" value="475"/>
</dbReference>
<dbReference type="IntAct" id="P52477">
    <property type="interactions" value="1"/>
</dbReference>
<dbReference type="STRING" id="208964.PA0425"/>
<dbReference type="ChEMBL" id="CHEMBL4523990"/>
<dbReference type="DrugBank" id="DB14879">
    <property type="generic name" value="Cefiderocol"/>
</dbReference>
<dbReference type="CARD" id="ARO:3000377">
    <property type="molecule name" value="MexA"/>
    <property type="mechanism identifier" value="ARO:0010000"/>
    <property type="mechanism name" value="antibiotic efflux"/>
</dbReference>
<dbReference type="TCDB" id="2.A.6.2.6">
    <property type="family name" value="the resistance-nodulation-cell division (rnd) superfamily"/>
</dbReference>
<dbReference type="PaxDb" id="208964-PA0425"/>
<dbReference type="GeneID" id="877855"/>
<dbReference type="KEGG" id="pae:PA0425"/>
<dbReference type="PATRIC" id="fig|208964.12.peg.447"/>
<dbReference type="PseudoCAP" id="PA0425"/>
<dbReference type="HOGENOM" id="CLU_018816_2_1_6"/>
<dbReference type="InParanoid" id="P52477"/>
<dbReference type="OrthoDB" id="9800613at2"/>
<dbReference type="PhylomeDB" id="P52477"/>
<dbReference type="BioCyc" id="PAER208964:G1FZ6-429-MONOMER"/>
<dbReference type="EvolutionaryTrace" id="P52477"/>
<dbReference type="PHI-base" id="PHI:11922"/>
<dbReference type="Proteomes" id="UP000002438">
    <property type="component" value="Chromosome"/>
</dbReference>
<dbReference type="GO" id="GO:1990281">
    <property type="term" value="C:efflux pump complex"/>
    <property type="evidence" value="ECO:0000314"/>
    <property type="project" value="UniProtKB"/>
</dbReference>
<dbReference type="GO" id="GO:0005886">
    <property type="term" value="C:plasma membrane"/>
    <property type="evidence" value="ECO:0000318"/>
    <property type="project" value="GO_Central"/>
</dbReference>
<dbReference type="GO" id="GO:0015562">
    <property type="term" value="F:efflux transmembrane transporter activity"/>
    <property type="evidence" value="ECO:0000314"/>
    <property type="project" value="UniProtKB"/>
</dbReference>
<dbReference type="GO" id="GO:0042802">
    <property type="term" value="F:identical protein binding"/>
    <property type="evidence" value="ECO:0000315"/>
    <property type="project" value="CAFA"/>
</dbReference>
<dbReference type="GO" id="GO:0051260">
    <property type="term" value="P:protein homooligomerization"/>
    <property type="evidence" value="ECO:0000315"/>
    <property type="project" value="CAFA"/>
</dbReference>
<dbReference type="GO" id="GO:0046677">
    <property type="term" value="P:response to antibiotic"/>
    <property type="evidence" value="ECO:0000314"/>
    <property type="project" value="PseudoCAP"/>
</dbReference>
<dbReference type="GO" id="GO:0055085">
    <property type="term" value="P:transmembrane transport"/>
    <property type="evidence" value="ECO:0000314"/>
    <property type="project" value="UniProtKB"/>
</dbReference>
<dbReference type="GO" id="GO:0140330">
    <property type="term" value="P:xenobiotic detoxification by transmembrane export across the cell outer membrane"/>
    <property type="evidence" value="ECO:0000314"/>
    <property type="project" value="UniProtKB"/>
</dbReference>
<dbReference type="FunFam" id="2.40.420.20:FF:000001">
    <property type="entry name" value="Efflux RND transporter periplasmic adaptor subunit"/>
    <property type="match status" value="1"/>
</dbReference>
<dbReference type="FunFam" id="2.40.30.170:FF:000001">
    <property type="entry name" value="Multidrug resistance efflux transporter MdtE"/>
    <property type="match status" value="1"/>
</dbReference>
<dbReference type="Gene3D" id="2.40.30.170">
    <property type="match status" value="1"/>
</dbReference>
<dbReference type="Gene3D" id="2.40.420.20">
    <property type="match status" value="1"/>
</dbReference>
<dbReference type="Gene3D" id="2.40.50.100">
    <property type="match status" value="1"/>
</dbReference>
<dbReference type="Gene3D" id="1.10.287.470">
    <property type="entry name" value="Helix hairpin bin"/>
    <property type="match status" value="1"/>
</dbReference>
<dbReference type="InterPro" id="IPR043602">
    <property type="entry name" value="CusB-like_dom_1"/>
</dbReference>
<dbReference type="InterPro" id="IPR032317">
    <property type="entry name" value="CusB_D23"/>
</dbReference>
<dbReference type="InterPro" id="IPR051160">
    <property type="entry name" value="MFP_Efflux"/>
</dbReference>
<dbReference type="InterPro" id="IPR006143">
    <property type="entry name" value="RND_pump_MFP"/>
</dbReference>
<dbReference type="NCBIfam" id="NF033834">
    <property type="entry name" value="RND_adapt_MexA"/>
    <property type="match status" value="1"/>
</dbReference>
<dbReference type="NCBIfam" id="TIGR01730">
    <property type="entry name" value="RND_mfp"/>
    <property type="match status" value="1"/>
</dbReference>
<dbReference type="PANTHER" id="PTHR30158">
    <property type="entry name" value="ACRA/E-RELATED COMPONENT OF DRUG EFFLUX TRANSPORTER"/>
    <property type="match status" value="1"/>
</dbReference>
<dbReference type="PANTHER" id="PTHR30158:SF3">
    <property type="entry name" value="MULTIDRUG EFFLUX PUMP SUBUNIT ACRA-RELATED"/>
    <property type="match status" value="1"/>
</dbReference>
<dbReference type="Pfam" id="PF00529">
    <property type="entry name" value="CusB_dom_1"/>
    <property type="match status" value="1"/>
</dbReference>
<dbReference type="Pfam" id="PF16576">
    <property type="entry name" value="HlyD_D23"/>
    <property type="match status" value="1"/>
</dbReference>
<dbReference type="SUPFAM" id="SSF111369">
    <property type="entry name" value="HlyD-like secretion proteins"/>
    <property type="match status" value="1"/>
</dbReference>
<dbReference type="PROSITE" id="PS51257">
    <property type="entry name" value="PROKAR_LIPOPROTEIN"/>
    <property type="match status" value="1"/>
</dbReference>
<protein>
    <recommendedName>
        <fullName>Multidrug resistance protein MexA</fullName>
    </recommendedName>
</protein>
<accession>P52477</accession>
<accession>Q9S506</accession>
<evidence type="ECO:0000255" key="1">
    <source>
        <dbReference type="PROSITE-ProRule" id="PRU00303"/>
    </source>
</evidence>
<evidence type="ECO:0000269" key="2">
    <source>
    </source>
</evidence>
<evidence type="ECO:0000269" key="3">
    <source>
    </source>
</evidence>
<evidence type="ECO:0000269" key="4">
    <source>
    </source>
</evidence>
<evidence type="ECO:0000269" key="5">
    <source>
    </source>
</evidence>
<evidence type="ECO:0000269" key="6">
    <source>
    </source>
</evidence>
<evidence type="ECO:0000269" key="7">
    <source>
    </source>
</evidence>
<evidence type="ECO:0000269" key="8">
    <source>
    </source>
</evidence>
<evidence type="ECO:0000269" key="9">
    <source>
    </source>
</evidence>
<evidence type="ECO:0000269" key="10">
    <source>
    </source>
</evidence>
<evidence type="ECO:0000269" key="11">
    <source>
    </source>
</evidence>
<evidence type="ECO:0000269" key="12">
    <source>
    </source>
</evidence>
<evidence type="ECO:0000269" key="13">
    <source>
    </source>
</evidence>
<evidence type="ECO:0000269" key="14">
    <source>
    </source>
</evidence>
<evidence type="ECO:0000303" key="15">
    <source>
    </source>
</evidence>
<evidence type="ECO:0000303" key="16">
    <source>
    </source>
</evidence>
<evidence type="ECO:0000305" key="17"/>
<evidence type="ECO:0000305" key="18">
    <source>
    </source>
</evidence>
<evidence type="ECO:0007744" key="19">
    <source>
        <dbReference type="PDB" id="6IOK"/>
    </source>
</evidence>
<evidence type="ECO:0007744" key="20">
    <source>
        <dbReference type="PDB" id="6IOL"/>
    </source>
</evidence>
<evidence type="ECO:0007744" key="21">
    <source>
        <dbReference type="PDB" id="6TA5"/>
    </source>
</evidence>
<evidence type="ECO:0007744" key="22">
    <source>
        <dbReference type="PDB" id="6TA6"/>
    </source>
</evidence>
<evidence type="ECO:0007829" key="23">
    <source>
        <dbReference type="PDB" id="1T5E"/>
    </source>
</evidence>
<evidence type="ECO:0007829" key="24">
    <source>
        <dbReference type="PDB" id="1VF7"/>
    </source>
</evidence>
<evidence type="ECO:0007829" key="25">
    <source>
        <dbReference type="PDB" id="2V4D"/>
    </source>
</evidence>
<evidence type="ECO:0007829" key="26">
    <source>
        <dbReference type="PDB" id="6TA5"/>
    </source>
</evidence>
<evidence type="ECO:0007829" key="27">
    <source>
        <dbReference type="PDB" id="6TA6"/>
    </source>
</evidence>
<feature type="signal peptide">
    <location>
        <begin position="1"/>
        <end position="23"/>
    </location>
</feature>
<feature type="chain" id="PRO_0000018712" description="Multidrug resistance protein MexA">
    <location>
        <begin position="24"/>
        <end position="383"/>
    </location>
</feature>
<feature type="coiled-coil region">
    <location>
        <begin position="97"/>
        <end position="151"/>
    </location>
</feature>
<feature type="lipid moiety-binding region" description="N-palmitoyl cysteine" evidence="1 2">
    <location>
        <position position="24"/>
    </location>
</feature>
<feature type="lipid moiety-binding region" description="S-diacylglycerol cysteine" evidence="18">
    <location>
        <position position="24"/>
    </location>
</feature>
<feature type="mutagenesis site" description="No palmitoylation occurs. Some of the protein becomes soluble, some remains attached to the inner membrane. The protein functions normally in antibiotic efflux." evidence="2">
    <original>C</original>
    <variation>F</variation>
    <variation>Y</variation>
    <location>
        <position position="24"/>
    </location>
</feature>
<feature type="mutagenesis site" description="Abolishes complex formation and thereby decreases drug resistance." evidence="8">
    <original>R</original>
    <variation>A</variation>
    <variation>D</variation>
    <location>
        <position position="57"/>
    </location>
</feature>
<feature type="mutagenesis site" description="Abolishes complex formation and thereby decreases drug resistance." evidence="8">
    <original>R</original>
    <variation>D</variation>
    <location>
        <position position="62"/>
    </location>
</feature>
<feature type="mutagenesis site" description="Abolishes complex formation and thereby abolishes drug resistance." evidence="8">
    <original>L</original>
    <variation>D</variation>
    <location>
        <position position="123"/>
    </location>
</feature>
<feature type="mutagenesis site" description="Abolishes complex formation and thereby decreases drug resistance." evidence="8">
    <original>S</original>
    <variation>D</variation>
    <location>
        <position position="130"/>
    </location>
</feature>
<feature type="mutagenesis site" description="Abolishes complex formation and thereby decreases drug resistance." evidence="8">
    <original>R</original>
    <variation>D</variation>
    <location>
        <position position="170"/>
    </location>
</feature>
<feature type="mutagenesis site" description="Abolishes complex formation and thereby decreases drug resistance." evidence="8">
    <original>T</original>
    <variation>A</variation>
    <variation>V</variation>
    <location>
        <position position="256"/>
    </location>
</feature>
<feature type="mutagenesis site" description="Abolishes complex formation and thereby decreases drug resistance." evidence="8">
    <original>R</original>
    <variation>A</variation>
    <variation>D</variation>
    <location>
        <position position="300"/>
    </location>
</feature>
<feature type="sequence conflict" description="In Ref. 4; AAD45627." evidence="17" ref="4">
    <original>L</original>
    <variation>M</variation>
    <location>
        <position position="210"/>
    </location>
</feature>
<feature type="strand" evidence="25">
    <location>
        <begin position="37"/>
        <end position="42"/>
    </location>
</feature>
<feature type="strand" evidence="24">
    <location>
        <begin position="51"/>
        <end position="57"/>
    </location>
</feature>
<feature type="strand" evidence="24">
    <location>
        <begin position="59"/>
        <end position="61"/>
    </location>
</feature>
<feature type="strand" evidence="24">
    <location>
        <begin position="63"/>
        <end position="66"/>
    </location>
</feature>
<feature type="strand" evidence="24">
    <location>
        <begin position="72"/>
        <end position="76"/>
    </location>
</feature>
<feature type="strand" evidence="24">
    <location>
        <begin position="81"/>
        <end position="85"/>
    </location>
</feature>
<feature type="strand" evidence="24">
    <location>
        <begin position="89"/>
        <end position="94"/>
    </location>
</feature>
<feature type="helix" evidence="24">
    <location>
        <begin position="97"/>
        <end position="125"/>
    </location>
</feature>
<feature type="helix" evidence="24">
    <location>
        <begin position="131"/>
        <end position="156"/>
    </location>
</feature>
<feature type="strand" evidence="24">
    <location>
        <begin position="159"/>
        <end position="161"/>
    </location>
</feature>
<feature type="strand" evidence="24">
    <location>
        <begin position="163"/>
        <end position="168"/>
    </location>
</feature>
<feature type="strand" evidence="24">
    <location>
        <begin position="187"/>
        <end position="191"/>
    </location>
</feature>
<feature type="strand" evidence="24">
    <location>
        <begin position="194"/>
        <end position="197"/>
    </location>
</feature>
<feature type="strand" evidence="24">
    <location>
        <begin position="200"/>
        <end position="203"/>
    </location>
</feature>
<feature type="helix" evidence="24">
    <location>
        <begin position="204"/>
        <end position="215"/>
    </location>
</feature>
<feature type="strand" evidence="25">
    <location>
        <begin position="217"/>
        <end position="219"/>
    </location>
</feature>
<feature type="strand" evidence="24">
    <location>
        <begin position="221"/>
        <end position="223"/>
    </location>
</feature>
<feature type="strand" evidence="24">
    <location>
        <begin position="226"/>
        <end position="228"/>
    </location>
</feature>
<feature type="strand" evidence="23">
    <location>
        <begin position="229"/>
        <end position="232"/>
    </location>
</feature>
<feature type="strand" evidence="24">
    <location>
        <begin position="238"/>
        <end position="241"/>
    </location>
</feature>
<feature type="strand" evidence="24">
    <location>
        <begin position="244"/>
        <end position="248"/>
    </location>
</feature>
<feature type="strand" evidence="24">
    <location>
        <begin position="254"/>
        <end position="261"/>
    </location>
</feature>
<feature type="strand" evidence="24">
    <location>
        <begin position="263"/>
        <end position="266"/>
    </location>
</feature>
<feature type="strand" evidence="24">
    <location>
        <begin position="268"/>
        <end position="270"/>
    </location>
</feature>
<feature type="strand" evidence="24">
    <location>
        <begin position="277"/>
        <end position="283"/>
    </location>
</feature>
<feature type="strand" evidence="24">
    <location>
        <begin position="286"/>
        <end position="289"/>
    </location>
</feature>
<feature type="strand" evidence="25">
    <location>
        <begin position="292"/>
        <end position="294"/>
    </location>
</feature>
<feature type="helix" evidence="25">
    <location>
        <begin position="295"/>
        <end position="297"/>
    </location>
</feature>
<feature type="strand" evidence="25">
    <location>
        <begin position="299"/>
        <end position="301"/>
    </location>
</feature>
<feature type="turn" evidence="25">
    <location>
        <begin position="302"/>
        <end position="304"/>
    </location>
</feature>
<feature type="strand" evidence="25">
    <location>
        <begin position="305"/>
        <end position="311"/>
    </location>
</feature>
<feature type="strand" evidence="25">
    <location>
        <begin position="315"/>
        <end position="322"/>
    </location>
</feature>
<feature type="strand" evidence="27">
    <location>
        <begin position="326"/>
        <end position="328"/>
    </location>
</feature>
<feature type="strand" evidence="25">
    <location>
        <begin position="331"/>
        <end position="337"/>
    </location>
</feature>
<feature type="strand" evidence="25">
    <location>
        <begin position="343"/>
        <end position="347"/>
    </location>
</feature>
<feature type="turn" evidence="25">
    <location>
        <begin position="348"/>
        <end position="350"/>
    </location>
</feature>
<feature type="strand" evidence="26">
    <location>
        <begin position="359"/>
        <end position="362"/>
    </location>
</feature>
<organism>
    <name type="scientific">Pseudomonas aeruginosa (strain ATCC 15692 / DSM 22644 / CIP 104116 / JCM 14847 / LMG 12228 / 1C / PRS 101 / PAO1)</name>
    <dbReference type="NCBI Taxonomy" id="208964"/>
    <lineage>
        <taxon>Bacteria</taxon>
        <taxon>Pseudomonadati</taxon>
        <taxon>Pseudomonadota</taxon>
        <taxon>Gammaproteobacteria</taxon>
        <taxon>Pseudomonadales</taxon>
        <taxon>Pseudomonadaceae</taxon>
        <taxon>Pseudomonas</taxon>
    </lineage>
</organism>
<keyword id="KW-0002">3D-structure</keyword>
<keyword id="KW-0046">Antibiotic resistance</keyword>
<keyword id="KW-0997">Cell inner membrane</keyword>
<keyword id="KW-1003">Cell membrane</keyword>
<keyword id="KW-0175">Coiled coil</keyword>
<keyword id="KW-0903">Direct protein sequencing</keyword>
<keyword id="KW-0449">Lipoprotein</keyword>
<keyword id="KW-0472">Membrane</keyword>
<keyword id="KW-0564">Palmitate</keyword>
<keyword id="KW-1185">Reference proteome</keyword>
<keyword id="KW-0732">Signal</keyword>
<keyword id="KW-0813">Transport</keyword>